<gene>
    <name evidence="2" type="primary">rplR</name>
    <name type="ordered locus">TT_C1312</name>
</gene>
<dbReference type="EMBL" id="AE017221">
    <property type="protein sequence ID" value="AAS81654.1"/>
    <property type="molecule type" value="Genomic_DNA"/>
</dbReference>
<dbReference type="RefSeq" id="WP_008633391.1">
    <property type="nucleotide sequence ID" value="NC_005835.1"/>
</dbReference>
<dbReference type="PDB" id="4V4I">
    <property type="method" value="X-ray"/>
    <property type="resolution" value="3.71 A"/>
    <property type="chains" value="M=1-112"/>
</dbReference>
<dbReference type="PDB" id="4V4J">
    <property type="method" value="X-ray"/>
    <property type="resolution" value="3.83 A"/>
    <property type="chains" value="M=1-112"/>
</dbReference>
<dbReference type="PDB" id="4V63">
    <property type="method" value="X-ray"/>
    <property type="resolution" value="3.21 A"/>
    <property type="chains" value="BS/DS=1-112"/>
</dbReference>
<dbReference type="PDB" id="4V67">
    <property type="method" value="X-ray"/>
    <property type="resolution" value="3.00 A"/>
    <property type="chains" value="BS/DS=1-112"/>
</dbReference>
<dbReference type="PDB" id="4V7P">
    <property type="method" value="X-ray"/>
    <property type="resolution" value="3.62 A"/>
    <property type="chains" value="BO/CO=2-112"/>
</dbReference>
<dbReference type="PDB" id="4V83">
    <property type="method" value="X-ray"/>
    <property type="resolution" value="3.50 A"/>
    <property type="chains" value="BO/DO=11-108"/>
</dbReference>
<dbReference type="PDB" id="4V84">
    <property type="method" value="X-ray"/>
    <property type="resolution" value="3.40 A"/>
    <property type="chains" value="BO/DO=11-108"/>
</dbReference>
<dbReference type="PDB" id="4V9J">
    <property type="method" value="X-ray"/>
    <property type="resolution" value="3.86 A"/>
    <property type="chains" value="BS/DS=11-109"/>
</dbReference>
<dbReference type="PDB" id="4V9K">
    <property type="method" value="X-ray"/>
    <property type="resolution" value="3.50 A"/>
    <property type="chains" value="BS/DS=11-109"/>
</dbReference>
<dbReference type="PDB" id="4V9L">
    <property type="method" value="X-ray"/>
    <property type="resolution" value="3.50 A"/>
    <property type="chains" value="BS/DS=11-109"/>
</dbReference>
<dbReference type="PDB" id="4V9M">
    <property type="method" value="X-ray"/>
    <property type="resolution" value="4.00 A"/>
    <property type="chains" value="BS/DS=11-109"/>
</dbReference>
<dbReference type="PDB" id="4V9N">
    <property type="method" value="X-ray"/>
    <property type="resolution" value="3.40 A"/>
    <property type="chains" value="BS/DS=11-108"/>
</dbReference>
<dbReference type="PDB" id="4V9Q">
    <property type="method" value="X-ray"/>
    <property type="resolution" value="3.40 A"/>
    <property type="chains" value="AO/CO=11-108"/>
</dbReference>
<dbReference type="PDB" id="4W29">
    <property type="method" value="X-ray"/>
    <property type="resolution" value="3.80 A"/>
    <property type="chains" value="BS/DS=11-109"/>
</dbReference>
<dbReference type="PDB" id="4XEJ">
    <property type="method" value="X-ray"/>
    <property type="resolution" value="3.80 A"/>
    <property type="chains" value="AL18/BL18=11-108"/>
</dbReference>
<dbReference type="PDB" id="5J4D">
    <property type="method" value="X-ray"/>
    <property type="resolution" value="3.10 A"/>
    <property type="chains" value="P/UB=1-112"/>
</dbReference>
<dbReference type="PDB" id="5V8I">
    <property type="method" value="X-ray"/>
    <property type="resolution" value="3.25 A"/>
    <property type="chains" value="1S/2S=1-112"/>
</dbReference>
<dbReference type="PDB" id="6B4V">
    <property type="method" value="X-ray"/>
    <property type="resolution" value="3.40 A"/>
    <property type="chains" value="P/TB=1-112"/>
</dbReference>
<dbReference type="PDB" id="6BOH">
    <property type="method" value="X-ray"/>
    <property type="resolution" value="3.40 A"/>
    <property type="chains" value="P/UB=1-112"/>
</dbReference>
<dbReference type="PDB" id="6BOK">
    <property type="method" value="X-ray"/>
    <property type="resolution" value="3.55 A"/>
    <property type="chains" value="P/SB=1-112"/>
</dbReference>
<dbReference type="PDB" id="6N1D">
    <property type="method" value="X-ray"/>
    <property type="resolution" value="3.20 A"/>
    <property type="chains" value="AL18/BL18=2-112"/>
</dbReference>
<dbReference type="PDBsum" id="4V4I"/>
<dbReference type="PDBsum" id="4V4J"/>
<dbReference type="PDBsum" id="4V63"/>
<dbReference type="PDBsum" id="4V67"/>
<dbReference type="PDBsum" id="4V7P"/>
<dbReference type="PDBsum" id="4V83"/>
<dbReference type="PDBsum" id="4V84"/>
<dbReference type="PDBsum" id="4V9J"/>
<dbReference type="PDBsum" id="4V9K"/>
<dbReference type="PDBsum" id="4V9L"/>
<dbReference type="PDBsum" id="4V9M"/>
<dbReference type="PDBsum" id="4V9N"/>
<dbReference type="PDBsum" id="4V9Q"/>
<dbReference type="PDBsum" id="4W29"/>
<dbReference type="PDBsum" id="4XEJ"/>
<dbReference type="PDBsum" id="5J4D"/>
<dbReference type="PDBsum" id="5V8I"/>
<dbReference type="PDBsum" id="6B4V"/>
<dbReference type="PDBsum" id="6BOH"/>
<dbReference type="PDBsum" id="6BOK"/>
<dbReference type="PDBsum" id="6N1D"/>
<dbReference type="BMRB" id="Q72I20"/>
<dbReference type="SMR" id="Q72I20"/>
<dbReference type="IntAct" id="Q72I20">
    <property type="interactions" value="4"/>
</dbReference>
<dbReference type="GeneID" id="3169978"/>
<dbReference type="KEGG" id="tth:TT_C1312"/>
<dbReference type="eggNOG" id="COG0256">
    <property type="taxonomic scope" value="Bacteria"/>
</dbReference>
<dbReference type="HOGENOM" id="CLU_098841_0_1_0"/>
<dbReference type="OrthoDB" id="9810939at2"/>
<dbReference type="Proteomes" id="UP000000592">
    <property type="component" value="Chromosome"/>
</dbReference>
<dbReference type="GO" id="GO:0022625">
    <property type="term" value="C:cytosolic large ribosomal subunit"/>
    <property type="evidence" value="ECO:0007669"/>
    <property type="project" value="TreeGrafter"/>
</dbReference>
<dbReference type="GO" id="GO:0008097">
    <property type="term" value="F:5S rRNA binding"/>
    <property type="evidence" value="ECO:0007669"/>
    <property type="project" value="TreeGrafter"/>
</dbReference>
<dbReference type="GO" id="GO:0003735">
    <property type="term" value="F:structural constituent of ribosome"/>
    <property type="evidence" value="ECO:0007669"/>
    <property type="project" value="InterPro"/>
</dbReference>
<dbReference type="GO" id="GO:0006412">
    <property type="term" value="P:translation"/>
    <property type="evidence" value="ECO:0007669"/>
    <property type="project" value="UniProtKB-UniRule"/>
</dbReference>
<dbReference type="CDD" id="cd00432">
    <property type="entry name" value="Ribosomal_L18_L5e"/>
    <property type="match status" value="1"/>
</dbReference>
<dbReference type="FunFam" id="3.30.420.100:FF:000001">
    <property type="entry name" value="50S ribosomal protein L18"/>
    <property type="match status" value="1"/>
</dbReference>
<dbReference type="Gene3D" id="3.30.420.100">
    <property type="match status" value="1"/>
</dbReference>
<dbReference type="HAMAP" id="MF_01337_B">
    <property type="entry name" value="Ribosomal_uL18_B"/>
    <property type="match status" value="1"/>
</dbReference>
<dbReference type="InterPro" id="IPR004389">
    <property type="entry name" value="Ribosomal_uL18_bac-type"/>
</dbReference>
<dbReference type="InterPro" id="IPR005484">
    <property type="entry name" value="Ribosomal_uL18_bac/euk"/>
</dbReference>
<dbReference type="NCBIfam" id="TIGR00060">
    <property type="entry name" value="L18_bact"/>
    <property type="match status" value="1"/>
</dbReference>
<dbReference type="PANTHER" id="PTHR12899">
    <property type="entry name" value="39S RIBOSOMAL PROTEIN L18, MITOCHONDRIAL"/>
    <property type="match status" value="1"/>
</dbReference>
<dbReference type="PANTHER" id="PTHR12899:SF3">
    <property type="entry name" value="LARGE RIBOSOMAL SUBUNIT PROTEIN UL18M"/>
    <property type="match status" value="1"/>
</dbReference>
<dbReference type="Pfam" id="PF00861">
    <property type="entry name" value="Ribosomal_L18p"/>
    <property type="match status" value="1"/>
</dbReference>
<dbReference type="SUPFAM" id="SSF53137">
    <property type="entry name" value="Translational machinery components"/>
    <property type="match status" value="1"/>
</dbReference>
<proteinExistence type="evidence at protein level"/>
<accession>Q72I20</accession>
<evidence type="ECO:0000250" key="1"/>
<evidence type="ECO:0000255" key="2">
    <source>
        <dbReference type="HAMAP-Rule" id="MF_01337"/>
    </source>
</evidence>
<evidence type="ECO:0000305" key="3"/>
<evidence type="ECO:0007829" key="4">
    <source>
        <dbReference type="PDB" id="4V63"/>
    </source>
</evidence>
<evidence type="ECO:0007829" key="5">
    <source>
        <dbReference type="PDB" id="4V67"/>
    </source>
</evidence>
<evidence type="ECO:0007829" key="6">
    <source>
        <dbReference type="PDB" id="4V9L"/>
    </source>
</evidence>
<evidence type="ECO:0007829" key="7">
    <source>
        <dbReference type="PDB" id="4V9N"/>
    </source>
</evidence>
<evidence type="ECO:0007829" key="8">
    <source>
        <dbReference type="PDB" id="4V9Q"/>
    </source>
</evidence>
<organism>
    <name type="scientific">Thermus thermophilus (strain ATCC BAA-163 / DSM 7039 / HB27)</name>
    <dbReference type="NCBI Taxonomy" id="262724"/>
    <lineage>
        <taxon>Bacteria</taxon>
        <taxon>Thermotogati</taxon>
        <taxon>Deinococcota</taxon>
        <taxon>Deinococci</taxon>
        <taxon>Thermales</taxon>
        <taxon>Thermaceae</taxon>
        <taxon>Thermus</taxon>
    </lineage>
</organism>
<protein>
    <recommendedName>
        <fullName evidence="2">Large ribosomal subunit protein uL18</fullName>
    </recommendedName>
    <alternativeName>
        <fullName evidence="3">50S ribosomal protein L18</fullName>
    </alternativeName>
</protein>
<feature type="initiator methionine" description="Removed" evidence="1">
    <location>
        <position position="1"/>
    </location>
</feature>
<feature type="chain" id="PRO_0000131371" description="Large ribosomal subunit protein uL18">
    <location>
        <begin position="2"/>
        <end position="112"/>
    </location>
</feature>
<feature type="helix" evidence="5">
    <location>
        <begin position="13"/>
        <end position="19"/>
    </location>
</feature>
<feature type="strand" evidence="7">
    <location>
        <begin position="21"/>
        <end position="23"/>
    </location>
</feature>
<feature type="strand" evidence="5">
    <location>
        <begin position="25"/>
        <end position="27"/>
    </location>
</feature>
<feature type="strand" evidence="5">
    <location>
        <begin position="38"/>
        <end position="41"/>
    </location>
</feature>
<feature type="turn" evidence="5">
    <location>
        <begin position="42"/>
        <end position="45"/>
    </location>
</feature>
<feature type="strand" evidence="4">
    <location>
        <begin position="46"/>
        <end position="51"/>
    </location>
</feature>
<feature type="turn" evidence="5">
    <location>
        <begin position="54"/>
        <end position="56"/>
    </location>
</feature>
<feature type="helix" evidence="5">
    <location>
        <begin position="63"/>
        <end position="78"/>
    </location>
</feature>
<feature type="strand" evidence="8">
    <location>
        <begin position="86"/>
        <end position="88"/>
    </location>
</feature>
<feature type="helix" evidence="6">
    <location>
        <begin position="90"/>
        <end position="92"/>
    </location>
</feature>
<feature type="strand" evidence="5">
    <location>
        <begin position="94"/>
        <end position="96"/>
    </location>
</feature>
<feature type="helix" evidence="5">
    <location>
        <begin position="97"/>
        <end position="107"/>
    </location>
</feature>
<name>RL18_THET2</name>
<reference key="1">
    <citation type="journal article" date="2004" name="Nat. Biotechnol.">
        <title>The genome sequence of the extreme thermophile Thermus thermophilus.</title>
        <authorList>
            <person name="Henne A."/>
            <person name="Brueggemann H."/>
            <person name="Raasch C."/>
            <person name="Wiezer A."/>
            <person name="Hartsch T."/>
            <person name="Liesegang H."/>
            <person name="Johann A."/>
            <person name="Lienard T."/>
            <person name="Gohl O."/>
            <person name="Martinez-Arias R."/>
            <person name="Jacobi C."/>
            <person name="Starkuviene V."/>
            <person name="Schlenczeck S."/>
            <person name="Dencker S."/>
            <person name="Huber R."/>
            <person name="Klenk H.-P."/>
            <person name="Kramer W."/>
            <person name="Merkl R."/>
            <person name="Gottschalk G."/>
            <person name="Fritz H.-J."/>
        </authorList>
    </citation>
    <scope>NUCLEOTIDE SEQUENCE [LARGE SCALE GENOMIC DNA]</scope>
    <source>
        <strain>ATCC BAA-163 / DSM 7039 / HB27</strain>
    </source>
</reference>
<keyword id="KW-0002">3D-structure</keyword>
<keyword id="KW-0687">Ribonucleoprotein</keyword>
<keyword id="KW-0689">Ribosomal protein</keyword>
<keyword id="KW-0694">RNA-binding</keyword>
<keyword id="KW-0699">rRNA-binding</keyword>
<sequence length="112" mass="12612">MARLTAYERRKFRVRNRIKRTGRLRLSVFRSLKHIYAQIIDDEKGVTLVSASSLALKLKGNKTEVARQVGRALAEKALALGIKQVAFDRGPYKYHGRVKALAEGAREGGLEF</sequence>
<comment type="function">
    <text evidence="2">This is one of the proteins that bind and probably mediate the attachment of the 5S RNA into the large ribosomal subunit, where it forms part of the central protuberance.</text>
</comment>
<comment type="subunit">
    <text evidence="2">Part of the 50S ribosomal subunit; part of the 5S rRNA/L5/L18/L25 subcomplex. Contacts the 5S and 23S rRNAs.</text>
</comment>
<comment type="similarity">
    <text evidence="2">Belongs to the universal ribosomal protein uL18 family.</text>
</comment>